<proteinExistence type="inferred from homology"/>
<accession>C3KDG1</accession>
<comment type="function">
    <text evidence="1">Modulates RecA activity.</text>
</comment>
<comment type="subcellular location">
    <subcellularLocation>
        <location evidence="1">Cytoplasm</location>
    </subcellularLocation>
</comment>
<comment type="similarity">
    <text evidence="1">Belongs to the RecX family.</text>
</comment>
<gene>
    <name evidence="1" type="primary">recX</name>
    <name type="ordered locus">PFLU_1190</name>
</gene>
<keyword id="KW-0963">Cytoplasm</keyword>
<evidence type="ECO:0000255" key="1">
    <source>
        <dbReference type="HAMAP-Rule" id="MF_01114"/>
    </source>
</evidence>
<feature type="chain" id="PRO_1000213595" description="Regulatory protein RecX">
    <location>
        <begin position="1"/>
        <end position="155"/>
    </location>
</feature>
<sequence>MTVVLDTLVAVRRTAMDLLARREHGRVELTRKLRQRGAEPEMIETALDRLTEEGLLSESRYLESFVSYRARSGYGPARIREELSQRGLQRADIDLALRECGISWQAQLEDTWRRKFSGHLPIDARERAKQGRFLSYRGFSMEMISRLLSGRDMDD</sequence>
<dbReference type="EMBL" id="AM181176">
    <property type="protein sequence ID" value="CAY47451.1"/>
    <property type="molecule type" value="Genomic_DNA"/>
</dbReference>
<dbReference type="RefSeq" id="WP_012722522.1">
    <property type="nucleotide sequence ID" value="NC_012660.1"/>
</dbReference>
<dbReference type="SMR" id="C3KDG1"/>
<dbReference type="STRING" id="294.SRM1_01190"/>
<dbReference type="GeneID" id="57378023"/>
<dbReference type="eggNOG" id="COG2137">
    <property type="taxonomic scope" value="Bacteria"/>
</dbReference>
<dbReference type="HOGENOM" id="CLU_066607_3_2_6"/>
<dbReference type="OrthoDB" id="7066780at2"/>
<dbReference type="GO" id="GO:0005737">
    <property type="term" value="C:cytoplasm"/>
    <property type="evidence" value="ECO:0007669"/>
    <property type="project" value="UniProtKB-SubCell"/>
</dbReference>
<dbReference type="GO" id="GO:0006282">
    <property type="term" value="P:regulation of DNA repair"/>
    <property type="evidence" value="ECO:0007669"/>
    <property type="project" value="UniProtKB-UniRule"/>
</dbReference>
<dbReference type="Gene3D" id="1.10.10.10">
    <property type="entry name" value="Winged helix-like DNA-binding domain superfamily/Winged helix DNA-binding domain"/>
    <property type="match status" value="3"/>
</dbReference>
<dbReference type="HAMAP" id="MF_01114">
    <property type="entry name" value="RecX"/>
    <property type="match status" value="1"/>
</dbReference>
<dbReference type="InterPro" id="IPR053926">
    <property type="entry name" value="RecX_HTH_1st"/>
</dbReference>
<dbReference type="InterPro" id="IPR053924">
    <property type="entry name" value="RecX_HTH_2nd"/>
</dbReference>
<dbReference type="InterPro" id="IPR053925">
    <property type="entry name" value="RecX_HTH_3rd"/>
</dbReference>
<dbReference type="InterPro" id="IPR003783">
    <property type="entry name" value="Regulatory_RecX"/>
</dbReference>
<dbReference type="InterPro" id="IPR036388">
    <property type="entry name" value="WH-like_DNA-bd_sf"/>
</dbReference>
<dbReference type="NCBIfam" id="NF001054">
    <property type="entry name" value="PRK00117.2-1"/>
    <property type="match status" value="1"/>
</dbReference>
<dbReference type="PANTHER" id="PTHR33602">
    <property type="entry name" value="REGULATORY PROTEIN RECX FAMILY PROTEIN"/>
    <property type="match status" value="1"/>
</dbReference>
<dbReference type="PANTHER" id="PTHR33602:SF1">
    <property type="entry name" value="REGULATORY PROTEIN RECX FAMILY PROTEIN"/>
    <property type="match status" value="1"/>
</dbReference>
<dbReference type="Pfam" id="PF21982">
    <property type="entry name" value="RecX_HTH1"/>
    <property type="match status" value="1"/>
</dbReference>
<dbReference type="Pfam" id="PF02631">
    <property type="entry name" value="RecX_HTH2"/>
    <property type="match status" value="1"/>
</dbReference>
<dbReference type="Pfam" id="PF21981">
    <property type="entry name" value="RecX_HTH3"/>
    <property type="match status" value="1"/>
</dbReference>
<organism>
    <name type="scientific">Pseudomonas fluorescens (strain SBW25)</name>
    <dbReference type="NCBI Taxonomy" id="216595"/>
    <lineage>
        <taxon>Bacteria</taxon>
        <taxon>Pseudomonadati</taxon>
        <taxon>Pseudomonadota</taxon>
        <taxon>Gammaproteobacteria</taxon>
        <taxon>Pseudomonadales</taxon>
        <taxon>Pseudomonadaceae</taxon>
        <taxon>Pseudomonas</taxon>
    </lineage>
</organism>
<reference key="1">
    <citation type="journal article" date="2009" name="Genome Biol.">
        <title>Genomic and genetic analyses of diversity and plant interactions of Pseudomonas fluorescens.</title>
        <authorList>
            <person name="Silby M.W."/>
            <person name="Cerdeno-Tarraga A.M."/>
            <person name="Vernikos G.S."/>
            <person name="Giddens S.R."/>
            <person name="Jackson R.W."/>
            <person name="Preston G.M."/>
            <person name="Zhang X.-X."/>
            <person name="Moon C.D."/>
            <person name="Gehrig S.M."/>
            <person name="Godfrey S.A.C."/>
            <person name="Knight C.G."/>
            <person name="Malone J.G."/>
            <person name="Robinson Z."/>
            <person name="Spiers A.J."/>
            <person name="Harris S."/>
            <person name="Challis G.L."/>
            <person name="Yaxley A.M."/>
            <person name="Harris D."/>
            <person name="Seeger K."/>
            <person name="Murphy L."/>
            <person name="Rutter S."/>
            <person name="Squares R."/>
            <person name="Quail M.A."/>
            <person name="Saunders E."/>
            <person name="Mavromatis K."/>
            <person name="Brettin T.S."/>
            <person name="Bentley S.D."/>
            <person name="Hothersall J."/>
            <person name="Stephens E."/>
            <person name="Thomas C.M."/>
            <person name="Parkhill J."/>
            <person name="Levy S.B."/>
            <person name="Rainey P.B."/>
            <person name="Thomson N.R."/>
        </authorList>
    </citation>
    <scope>NUCLEOTIDE SEQUENCE [LARGE SCALE GENOMIC DNA]</scope>
    <source>
        <strain>SBW25</strain>
    </source>
</reference>
<name>RECX_PSEFS</name>
<protein>
    <recommendedName>
        <fullName evidence="1">Regulatory protein RecX</fullName>
    </recommendedName>
</protein>